<dbReference type="EMBL" id="CP000686">
    <property type="protein sequence ID" value="ABQ91820.1"/>
    <property type="molecule type" value="Genomic_DNA"/>
</dbReference>
<dbReference type="RefSeq" id="WP_011958162.1">
    <property type="nucleotide sequence ID" value="NC_009523.1"/>
</dbReference>
<dbReference type="SMR" id="A5UYW7"/>
<dbReference type="STRING" id="357808.RoseRS_3462"/>
<dbReference type="KEGG" id="rrs:RoseRS_3462"/>
<dbReference type="eggNOG" id="COG1420">
    <property type="taxonomic scope" value="Bacteria"/>
</dbReference>
<dbReference type="HOGENOM" id="CLU_050019_1_0_0"/>
<dbReference type="OrthoDB" id="9783139at2"/>
<dbReference type="Proteomes" id="UP000006554">
    <property type="component" value="Chromosome"/>
</dbReference>
<dbReference type="GO" id="GO:0003677">
    <property type="term" value="F:DNA binding"/>
    <property type="evidence" value="ECO:0007669"/>
    <property type="project" value="InterPro"/>
</dbReference>
<dbReference type="GO" id="GO:0045892">
    <property type="term" value="P:negative regulation of DNA-templated transcription"/>
    <property type="evidence" value="ECO:0007669"/>
    <property type="project" value="UniProtKB-UniRule"/>
</dbReference>
<dbReference type="Gene3D" id="3.30.450.40">
    <property type="match status" value="1"/>
</dbReference>
<dbReference type="Gene3D" id="3.30.390.60">
    <property type="entry name" value="Heat-inducible transcription repressor hrca homolog, domain 3"/>
    <property type="match status" value="1"/>
</dbReference>
<dbReference type="Gene3D" id="1.10.10.10">
    <property type="entry name" value="Winged helix-like DNA-binding domain superfamily/Winged helix DNA-binding domain"/>
    <property type="match status" value="1"/>
</dbReference>
<dbReference type="HAMAP" id="MF_00081">
    <property type="entry name" value="HrcA"/>
    <property type="match status" value="1"/>
</dbReference>
<dbReference type="InterPro" id="IPR029016">
    <property type="entry name" value="GAF-like_dom_sf"/>
</dbReference>
<dbReference type="InterPro" id="IPR002571">
    <property type="entry name" value="HrcA"/>
</dbReference>
<dbReference type="InterPro" id="IPR021153">
    <property type="entry name" value="HrcA_C"/>
</dbReference>
<dbReference type="InterPro" id="IPR036388">
    <property type="entry name" value="WH-like_DNA-bd_sf"/>
</dbReference>
<dbReference type="InterPro" id="IPR036390">
    <property type="entry name" value="WH_DNA-bd_sf"/>
</dbReference>
<dbReference type="InterPro" id="IPR023120">
    <property type="entry name" value="WHTH_transcript_rep_HrcA_IDD"/>
</dbReference>
<dbReference type="NCBIfam" id="TIGR00331">
    <property type="entry name" value="hrcA"/>
    <property type="match status" value="1"/>
</dbReference>
<dbReference type="PANTHER" id="PTHR34824">
    <property type="entry name" value="HEAT-INDUCIBLE TRANSCRIPTION REPRESSOR HRCA"/>
    <property type="match status" value="1"/>
</dbReference>
<dbReference type="PANTHER" id="PTHR34824:SF1">
    <property type="entry name" value="HEAT-INDUCIBLE TRANSCRIPTION REPRESSOR HRCA"/>
    <property type="match status" value="1"/>
</dbReference>
<dbReference type="Pfam" id="PF01628">
    <property type="entry name" value="HrcA"/>
    <property type="match status" value="1"/>
</dbReference>
<dbReference type="PIRSF" id="PIRSF005485">
    <property type="entry name" value="HrcA"/>
    <property type="match status" value="1"/>
</dbReference>
<dbReference type="SUPFAM" id="SSF55781">
    <property type="entry name" value="GAF domain-like"/>
    <property type="match status" value="1"/>
</dbReference>
<dbReference type="SUPFAM" id="SSF46785">
    <property type="entry name" value="Winged helix' DNA-binding domain"/>
    <property type="match status" value="1"/>
</dbReference>
<keyword id="KW-0678">Repressor</keyword>
<keyword id="KW-0346">Stress response</keyword>
<keyword id="KW-0804">Transcription</keyword>
<keyword id="KW-0805">Transcription regulation</keyword>
<sequence length="359" mass="40014">MTTDLTDRRRLILKLAIQEFIESSQPVASDLLVRKYRLNVSPATVRNELAALEELGYLTHLHTSAGRVPTDAGYRYFVENLMDRTPLSATEQRTIRHQFYQVRSELDQWIQLAGAVLARTAQNASVVTPPRAQQARLKHLELIAIHETTALMVLVLHDGTIRQQTLTLDVAMTQEELSRCAAQINERCCDAPVERIEEVLKQERAQEPPGGNALVCQVLDLVVKAMHQFNEHISSDIHSDGLIEILNQPEFSRVERVRRMVEILQSGRALGTLIPRALSSSGVQVVIGGEHSYDEMREYSVVLSRYGGGEIVGVLGVIGPTRMAYPRAISAVRYISAVMSDLLAELYGIEGANRLNSEP</sequence>
<feature type="chain" id="PRO_1000010446" description="Heat-inducible transcription repressor HrcA">
    <location>
        <begin position="1"/>
        <end position="359"/>
    </location>
</feature>
<name>HRCA_ROSS1</name>
<comment type="function">
    <text evidence="1">Negative regulator of class I heat shock genes (grpE-dnaK-dnaJ and groELS operons). Prevents heat-shock induction of these operons.</text>
</comment>
<comment type="similarity">
    <text evidence="1">Belongs to the HrcA family.</text>
</comment>
<proteinExistence type="inferred from homology"/>
<organism>
    <name type="scientific">Roseiflexus sp. (strain RS-1)</name>
    <dbReference type="NCBI Taxonomy" id="357808"/>
    <lineage>
        <taxon>Bacteria</taxon>
        <taxon>Bacillati</taxon>
        <taxon>Chloroflexota</taxon>
        <taxon>Chloroflexia</taxon>
        <taxon>Chloroflexales</taxon>
        <taxon>Roseiflexineae</taxon>
        <taxon>Roseiflexaceae</taxon>
        <taxon>Roseiflexus</taxon>
    </lineage>
</organism>
<reference key="1">
    <citation type="submission" date="2007-04" db="EMBL/GenBank/DDBJ databases">
        <title>Complete sequence of Roseiflexus sp. RS-1.</title>
        <authorList>
            <consortium name="US DOE Joint Genome Institute"/>
            <person name="Copeland A."/>
            <person name="Lucas S."/>
            <person name="Lapidus A."/>
            <person name="Barry K."/>
            <person name="Detter J.C."/>
            <person name="Glavina del Rio T."/>
            <person name="Hammon N."/>
            <person name="Israni S."/>
            <person name="Dalin E."/>
            <person name="Tice H."/>
            <person name="Pitluck S."/>
            <person name="Chertkov O."/>
            <person name="Brettin T."/>
            <person name="Bruce D."/>
            <person name="Han C."/>
            <person name="Schmutz J."/>
            <person name="Larimer F."/>
            <person name="Land M."/>
            <person name="Hauser L."/>
            <person name="Kyrpides N."/>
            <person name="Mikhailova N."/>
            <person name="Bryant D.A."/>
            <person name="Richardson P."/>
        </authorList>
    </citation>
    <scope>NUCLEOTIDE SEQUENCE [LARGE SCALE GENOMIC DNA]</scope>
    <source>
        <strain>RS-1</strain>
    </source>
</reference>
<protein>
    <recommendedName>
        <fullName evidence="1">Heat-inducible transcription repressor HrcA</fullName>
    </recommendedName>
</protein>
<gene>
    <name evidence="1" type="primary">hrcA</name>
    <name type="ordered locus">RoseRS_3462</name>
</gene>
<evidence type="ECO:0000255" key="1">
    <source>
        <dbReference type="HAMAP-Rule" id="MF_00081"/>
    </source>
</evidence>
<accession>A5UYW7</accession>